<accession>Q54UL5</accession>
<organism>
    <name type="scientific">Dictyostelium discoideum</name>
    <name type="common">Social amoeba</name>
    <dbReference type="NCBI Taxonomy" id="44689"/>
    <lineage>
        <taxon>Eukaryota</taxon>
        <taxon>Amoebozoa</taxon>
        <taxon>Evosea</taxon>
        <taxon>Eumycetozoa</taxon>
        <taxon>Dictyostelia</taxon>
        <taxon>Dictyosteliales</taxon>
        <taxon>Dictyosteliaceae</taxon>
        <taxon>Dictyostelium</taxon>
    </lineage>
</organism>
<keyword id="KW-1185">Reference proteome</keyword>
<name>HSL44_DICDI</name>
<dbReference type="EMBL" id="AAFI02000040">
    <property type="protein sequence ID" value="EAL66797.1"/>
    <property type="molecule type" value="Genomic_DNA"/>
</dbReference>
<dbReference type="RefSeq" id="XP_640761.1">
    <property type="nucleotide sequence ID" value="XM_635669.1"/>
</dbReference>
<dbReference type="PaxDb" id="44689-DDB0252786"/>
<dbReference type="EnsemblProtists" id="EAL66797">
    <property type="protein sequence ID" value="EAL66797"/>
    <property type="gene ID" value="DDB_G0281001"/>
</dbReference>
<dbReference type="GeneID" id="8622814"/>
<dbReference type="KEGG" id="ddi:DDB_G0281001"/>
<dbReference type="dictyBase" id="DDB_G0281001"/>
<dbReference type="HOGENOM" id="CLU_181850_0_0_1"/>
<dbReference type="InParanoid" id="Q54UL5"/>
<dbReference type="PRO" id="PR:Q54UL5"/>
<dbReference type="Proteomes" id="UP000002195">
    <property type="component" value="Chromosome 3"/>
</dbReference>
<dbReference type="GO" id="GO:0030587">
    <property type="term" value="P:sorocarp development"/>
    <property type="evidence" value="ECO:0000318"/>
    <property type="project" value="GO_Central"/>
</dbReference>
<dbReference type="InterPro" id="IPR050533">
    <property type="entry name" value="HssA/B-like_chaperone"/>
</dbReference>
<dbReference type="InterPro" id="IPR008455">
    <property type="entry name" value="HssA/B-related"/>
</dbReference>
<dbReference type="PANTHER" id="PTHR31059">
    <property type="entry name" value="HSSA/B-LIKE PROTEIN 1-RELATED-RELATED"/>
    <property type="match status" value="1"/>
</dbReference>
<dbReference type="PANTHER" id="PTHR31059:SF5">
    <property type="entry name" value="HSSA_B-LIKE PROTEIN 1-RELATED"/>
    <property type="match status" value="1"/>
</dbReference>
<dbReference type="Pfam" id="PF05710">
    <property type="entry name" value="Coiled"/>
    <property type="match status" value="1"/>
</dbReference>
<proteinExistence type="inferred from homology"/>
<feature type="chain" id="PRO_0000330412" description="HssA/B-like protein 44">
    <location>
        <begin position="1"/>
        <end position="97"/>
    </location>
</feature>
<feature type="region of interest" description="Disordered" evidence="1">
    <location>
        <begin position="1"/>
        <end position="22"/>
    </location>
</feature>
<feature type="region of interest" description="Disordered" evidence="1">
    <location>
        <begin position="62"/>
        <end position="97"/>
    </location>
</feature>
<feature type="compositionally biased region" description="Basic residues" evidence="1">
    <location>
        <begin position="72"/>
        <end position="84"/>
    </location>
</feature>
<feature type="compositionally biased region" description="Gly residues" evidence="1">
    <location>
        <begin position="85"/>
        <end position="97"/>
    </location>
</feature>
<evidence type="ECO:0000256" key="1">
    <source>
        <dbReference type="SAM" id="MobiDB-lite"/>
    </source>
</evidence>
<evidence type="ECO:0000305" key="2"/>
<gene>
    <name type="primary">hssl44</name>
    <name type="ORF">DDB_G0281001</name>
</gene>
<comment type="similarity">
    <text evidence="2">Belongs to the hssA/B family.</text>
</comment>
<protein>
    <recommendedName>
        <fullName>HssA/B-like protein 44</fullName>
    </recommendedName>
</protein>
<reference key="1">
    <citation type="journal article" date="2005" name="Nature">
        <title>The genome of the social amoeba Dictyostelium discoideum.</title>
        <authorList>
            <person name="Eichinger L."/>
            <person name="Pachebat J.A."/>
            <person name="Gloeckner G."/>
            <person name="Rajandream M.A."/>
            <person name="Sucgang R."/>
            <person name="Berriman M."/>
            <person name="Song J."/>
            <person name="Olsen R."/>
            <person name="Szafranski K."/>
            <person name="Xu Q."/>
            <person name="Tunggal B."/>
            <person name="Kummerfeld S."/>
            <person name="Madera M."/>
            <person name="Konfortov B.A."/>
            <person name="Rivero F."/>
            <person name="Bankier A.T."/>
            <person name="Lehmann R."/>
            <person name="Hamlin N."/>
            <person name="Davies R."/>
            <person name="Gaudet P."/>
            <person name="Fey P."/>
            <person name="Pilcher K."/>
            <person name="Chen G."/>
            <person name="Saunders D."/>
            <person name="Sodergren E.J."/>
            <person name="Davis P."/>
            <person name="Kerhornou A."/>
            <person name="Nie X."/>
            <person name="Hall N."/>
            <person name="Anjard C."/>
            <person name="Hemphill L."/>
            <person name="Bason N."/>
            <person name="Farbrother P."/>
            <person name="Desany B."/>
            <person name="Just E."/>
            <person name="Morio T."/>
            <person name="Rost R."/>
            <person name="Churcher C.M."/>
            <person name="Cooper J."/>
            <person name="Haydock S."/>
            <person name="van Driessche N."/>
            <person name="Cronin A."/>
            <person name="Goodhead I."/>
            <person name="Muzny D.M."/>
            <person name="Mourier T."/>
            <person name="Pain A."/>
            <person name="Lu M."/>
            <person name="Harper D."/>
            <person name="Lindsay R."/>
            <person name="Hauser H."/>
            <person name="James K.D."/>
            <person name="Quiles M."/>
            <person name="Madan Babu M."/>
            <person name="Saito T."/>
            <person name="Buchrieser C."/>
            <person name="Wardroper A."/>
            <person name="Felder M."/>
            <person name="Thangavelu M."/>
            <person name="Johnson D."/>
            <person name="Knights A."/>
            <person name="Loulseged H."/>
            <person name="Mungall K.L."/>
            <person name="Oliver K."/>
            <person name="Price C."/>
            <person name="Quail M.A."/>
            <person name="Urushihara H."/>
            <person name="Hernandez J."/>
            <person name="Rabbinowitsch E."/>
            <person name="Steffen D."/>
            <person name="Sanders M."/>
            <person name="Ma J."/>
            <person name="Kohara Y."/>
            <person name="Sharp S."/>
            <person name="Simmonds M.N."/>
            <person name="Spiegler S."/>
            <person name="Tivey A."/>
            <person name="Sugano S."/>
            <person name="White B."/>
            <person name="Walker D."/>
            <person name="Woodward J.R."/>
            <person name="Winckler T."/>
            <person name="Tanaka Y."/>
            <person name="Shaulsky G."/>
            <person name="Schleicher M."/>
            <person name="Weinstock G.M."/>
            <person name="Rosenthal A."/>
            <person name="Cox E.C."/>
            <person name="Chisholm R.L."/>
            <person name="Gibbs R.A."/>
            <person name="Loomis W.F."/>
            <person name="Platzer M."/>
            <person name="Kay R.R."/>
            <person name="Williams J.G."/>
            <person name="Dear P.H."/>
            <person name="Noegel A.A."/>
            <person name="Barrell B.G."/>
            <person name="Kuspa A."/>
        </authorList>
    </citation>
    <scope>NUCLEOTIDE SEQUENCE [LARGE SCALE GENOMIC DNA]</scope>
    <source>
        <strain>AX4</strain>
    </source>
</reference>
<sequence length="97" mass="8891">MTLFSSISSISSSISSSKSSIASFGNGTSMGSNSIACGGGCGSGNGFGGIFIGANIDLTGGASTSSGGRGGRPGRGHGGPHGHGRGGSGSGSSCGCN</sequence>